<reference key="1">
    <citation type="journal article" date="1992" name="Gene">
        <title>Cloning and analysis of a Candida maltosa gene which confers resistance to formaldehyde in Saccharomyces cerevisiae.</title>
        <authorList>
            <person name="Sasnauskas K."/>
            <person name="Jomantiene R."/>
            <person name="Januska A."/>
            <person name="Lebediene E."/>
            <person name="Lebedys J."/>
            <person name="Janulaitis A."/>
        </authorList>
    </citation>
    <scope>NUCLEOTIDE SEQUENCE [GENOMIC DNA]</scope>
    <source>
        <strain>899</strain>
    </source>
</reference>
<evidence type="ECO:0000250" key="1">
    <source>
        <dbReference type="UniProtKB" id="P06525"/>
    </source>
</evidence>
<evidence type="ECO:0000250" key="2">
    <source>
        <dbReference type="UniProtKB" id="P32771"/>
    </source>
</evidence>
<evidence type="ECO:0000250" key="3">
    <source>
        <dbReference type="UniProtKB" id="Q96533"/>
    </source>
</evidence>
<evidence type="ECO:0000305" key="4"/>
<comment type="function">
    <text evidence="2">Oxidizes long-chain alcohols and, in the presence of glutathione, is able to oxidize formaldehyde. Also acts as a S-nitroso-glutathione reductase by catalyzing the NADH-dependent reduction of S-nitrosoglutathione, thereby regulating protein S-nitrosylation.</text>
</comment>
<comment type="catalytic activity">
    <reaction evidence="2">
        <text>a primary alcohol + NAD(+) = an aldehyde + NADH + H(+)</text>
        <dbReference type="Rhea" id="RHEA:10736"/>
        <dbReference type="ChEBI" id="CHEBI:15378"/>
        <dbReference type="ChEBI" id="CHEBI:15734"/>
        <dbReference type="ChEBI" id="CHEBI:17478"/>
        <dbReference type="ChEBI" id="CHEBI:57540"/>
        <dbReference type="ChEBI" id="CHEBI:57945"/>
        <dbReference type="EC" id="1.1.1.1"/>
    </reaction>
</comment>
<comment type="catalytic activity">
    <reaction evidence="2">
        <text>a secondary alcohol + NAD(+) = a ketone + NADH + H(+)</text>
        <dbReference type="Rhea" id="RHEA:10740"/>
        <dbReference type="ChEBI" id="CHEBI:15378"/>
        <dbReference type="ChEBI" id="CHEBI:17087"/>
        <dbReference type="ChEBI" id="CHEBI:35681"/>
        <dbReference type="ChEBI" id="CHEBI:57540"/>
        <dbReference type="ChEBI" id="CHEBI:57945"/>
        <dbReference type="EC" id="1.1.1.1"/>
    </reaction>
</comment>
<comment type="catalytic activity">
    <reaction evidence="2">
        <text>S-(hydroxymethyl)glutathione + NADP(+) = S-formylglutathione + NADPH + H(+)</text>
        <dbReference type="Rhea" id="RHEA:19981"/>
        <dbReference type="ChEBI" id="CHEBI:15378"/>
        <dbReference type="ChEBI" id="CHEBI:57688"/>
        <dbReference type="ChEBI" id="CHEBI:57783"/>
        <dbReference type="ChEBI" id="CHEBI:58349"/>
        <dbReference type="ChEBI" id="CHEBI:58758"/>
        <dbReference type="EC" id="1.1.1.284"/>
    </reaction>
</comment>
<comment type="catalytic activity">
    <reaction evidence="1">
        <text>S-(hydroxymethyl)glutathione + NAD(+) = S-formylglutathione + NADH + H(+)</text>
        <dbReference type="Rhea" id="RHEA:19985"/>
        <dbReference type="ChEBI" id="CHEBI:15378"/>
        <dbReference type="ChEBI" id="CHEBI:57540"/>
        <dbReference type="ChEBI" id="CHEBI:57688"/>
        <dbReference type="ChEBI" id="CHEBI:57945"/>
        <dbReference type="ChEBI" id="CHEBI:58758"/>
        <dbReference type="EC" id="1.1.1.284"/>
    </reaction>
</comment>
<comment type="catalytic activity">
    <reaction evidence="2">
        <text>S-nitrosoglutathione + NADH + H(+) = S-(hydroxysulfenamide)glutathione + NAD(+)</text>
        <dbReference type="Rhea" id="RHEA:78371"/>
        <dbReference type="ChEBI" id="CHEBI:15378"/>
        <dbReference type="ChEBI" id="CHEBI:57540"/>
        <dbReference type="ChEBI" id="CHEBI:57945"/>
        <dbReference type="ChEBI" id="CHEBI:145544"/>
        <dbReference type="ChEBI" id="CHEBI:229723"/>
    </reaction>
</comment>
<comment type="cofactor">
    <cofactor evidence="1">
        <name>Zn(2+)</name>
        <dbReference type="ChEBI" id="CHEBI:29105"/>
    </cofactor>
    <text evidence="1">Binds 2 Zn(2+) ions per subunit.</text>
</comment>
<comment type="similarity">
    <text evidence="4">Belongs to the zinc-containing alcohol dehydrogenase family. Class-III subfamily.</text>
</comment>
<feature type="chain" id="PRO_0000160781" description="S-(hydroxymethyl)glutathione dehydrogenase">
    <location>
        <begin position="1"/>
        <end position="381"/>
    </location>
</feature>
<feature type="binding site" evidence="3">
    <location>
        <position position="49"/>
    </location>
    <ligand>
        <name>Zn(2+)</name>
        <dbReference type="ChEBI" id="CHEBI:29105"/>
        <label>1</label>
        <note>catalytic</note>
    </ligand>
</feature>
<feature type="binding site" evidence="3">
    <location>
        <position position="50"/>
    </location>
    <ligand>
        <name>NAD(+)</name>
        <dbReference type="ChEBI" id="CHEBI:57540"/>
    </ligand>
</feature>
<feature type="binding site" evidence="3">
    <location>
        <position position="71"/>
    </location>
    <ligand>
        <name>Zn(2+)</name>
        <dbReference type="ChEBI" id="CHEBI:29105"/>
        <label>1</label>
        <note>catalytic</note>
    </ligand>
</feature>
<feature type="binding site" evidence="3">
    <location>
        <position position="72"/>
    </location>
    <ligand>
        <name>Zn(2+)</name>
        <dbReference type="ChEBI" id="CHEBI:29105"/>
        <label>1</label>
        <note>catalytic</note>
    </ligand>
</feature>
<feature type="binding site" evidence="3">
    <location>
        <position position="101"/>
    </location>
    <ligand>
        <name>Zn(2+)</name>
        <dbReference type="ChEBI" id="CHEBI:29105"/>
        <label>2</label>
    </ligand>
</feature>
<feature type="binding site" evidence="3">
    <location>
        <position position="104"/>
    </location>
    <ligand>
        <name>Zn(2+)</name>
        <dbReference type="ChEBI" id="CHEBI:29105"/>
        <label>2</label>
    </ligand>
</feature>
<feature type="binding site" evidence="3">
    <location>
        <position position="107"/>
    </location>
    <ligand>
        <name>Zn(2+)</name>
        <dbReference type="ChEBI" id="CHEBI:29105"/>
        <label>2</label>
    </ligand>
</feature>
<feature type="binding site" evidence="3">
    <location>
        <position position="115"/>
    </location>
    <ligand>
        <name>Zn(2+)</name>
        <dbReference type="ChEBI" id="CHEBI:29105"/>
        <label>2</label>
    </ligand>
</feature>
<feature type="binding site" evidence="3">
    <location>
        <position position="178"/>
    </location>
    <ligand>
        <name>Zn(2+)</name>
        <dbReference type="ChEBI" id="CHEBI:29105"/>
        <label>1</label>
        <note>catalytic</note>
    </ligand>
</feature>
<feature type="binding site" evidence="3">
    <location>
        <begin position="203"/>
        <end position="208"/>
    </location>
    <ligand>
        <name>NAD(+)</name>
        <dbReference type="ChEBI" id="CHEBI:57540"/>
    </ligand>
</feature>
<feature type="binding site" evidence="3">
    <location>
        <position position="227"/>
    </location>
    <ligand>
        <name>NAD(+)</name>
        <dbReference type="ChEBI" id="CHEBI:57540"/>
    </ligand>
</feature>
<feature type="binding site" evidence="3">
    <location>
        <begin position="298"/>
        <end position="300"/>
    </location>
    <ligand>
        <name>NAD(+)</name>
        <dbReference type="ChEBI" id="CHEBI:57540"/>
    </ligand>
</feature>
<protein>
    <recommendedName>
        <fullName>S-(hydroxymethyl)glutathione dehydrogenase</fullName>
        <ecNumber evidence="2">1.1.1.284</ecNumber>
    </recommendedName>
    <alternativeName>
        <fullName evidence="2">Alcohol dehydrogenase</fullName>
        <ecNumber evidence="2">1.1.1.1</ecNumber>
    </alternativeName>
    <alternativeName>
        <fullName>Glutathione-dependent formaldehyde dehydrogenase</fullName>
        <shortName>FALDH</shortName>
        <shortName>FDH</shortName>
        <shortName>FLD</shortName>
        <shortName>GSH-FDH</shortName>
        <ecNumber evidence="2">1.1.1.-</ecNumber>
    </alternativeName>
</protein>
<gene>
    <name type="primary">FDH1</name>
    <name type="synonym">ADH1</name>
</gene>
<name>FADH_CANMA</name>
<proteinExistence type="inferred from homology"/>
<keyword id="KW-0479">Metal-binding</keyword>
<keyword id="KW-0520">NAD</keyword>
<keyword id="KW-0560">Oxidoreductase</keyword>
<keyword id="KW-0862">Zinc</keyword>
<dbReference type="EC" id="1.1.1.284" evidence="2"/>
<dbReference type="EC" id="1.1.1.1" evidence="2"/>
<dbReference type="EC" id="1.1.1.-" evidence="2"/>
<dbReference type="EMBL" id="M58332">
    <property type="protein sequence ID" value="AAA34344.1"/>
    <property type="molecule type" value="Genomic_DNA"/>
</dbReference>
<dbReference type="PIR" id="JN0447">
    <property type="entry name" value="JN0447"/>
</dbReference>
<dbReference type="SMR" id="Q06099"/>
<dbReference type="GO" id="GO:0005829">
    <property type="term" value="C:cytosol"/>
    <property type="evidence" value="ECO:0007669"/>
    <property type="project" value="TreeGrafter"/>
</dbReference>
<dbReference type="GO" id="GO:0004022">
    <property type="term" value="F:alcohol dehydrogenase (NAD+) activity"/>
    <property type="evidence" value="ECO:0007669"/>
    <property type="project" value="RHEA"/>
</dbReference>
<dbReference type="GO" id="GO:0106322">
    <property type="term" value="F:S-(hydroxymethyl)glutathione dehydrogenase (NAD+) activity"/>
    <property type="evidence" value="ECO:0007669"/>
    <property type="project" value="RHEA"/>
</dbReference>
<dbReference type="GO" id="GO:0106321">
    <property type="term" value="F:S-(hydroxymethyl)glutathione dehydrogenase (NADP+) activity"/>
    <property type="evidence" value="ECO:0007669"/>
    <property type="project" value="RHEA"/>
</dbReference>
<dbReference type="GO" id="GO:0080007">
    <property type="term" value="F:S-nitrosoglutathione reductase (NADH) activity"/>
    <property type="evidence" value="ECO:0007669"/>
    <property type="project" value="RHEA"/>
</dbReference>
<dbReference type="GO" id="GO:0008270">
    <property type="term" value="F:zinc ion binding"/>
    <property type="evidence" value="ECO:0007669"/>
    <property type="project" value="InterPro"/>
</dbReference>
<dbReference type="GO" id="GO:0046294">
    <property type="term" value="P:formaldehyde catabolic process"/>
    <property type="evidence" value="ECO:0007669"/>
    <property type="project" value="InterPro"/>
</dbReference>
<dbReference type="CDD" id="cd08300">
    <property type="entry name" value="alcohol_DH_class_III"/>
    <property type="match status" value="1"/>
</dbReference>
<dbReference type="FunFam" id="3.40.50.720:FF:000003">
    <property type="entry name" value="S-(hydroxymethyl)glutathione dehydrogenase"/>
    <property type="match status" value="1"/>
</dbReference>
<dbReference type="FunFam" id="3.90.180.10:FF:000001">
    <property type="entry name" value="S-(hydroxymethyl)glutathione dehydrogenase"/>
    <property type="match status" value="1"/>
</dbReference>
<dbReference type="Gene3D" id="3.90.180.10">
    <property type="entry name" value="Medium-chain alcohol dehydrogenases, catalytic domain"/>
    <property type="match status" value="1"/>
</dbReference>
<dbReference type="Gene3D" id="3.40.50.720">
    <property type="entry name" value="NAD(P)-binding Rossmann-like Domain"/>
    <property type="match status" value="1"/>
</dbReference>
<dbReference type="InterPro" id="IPR013149">
    <property type="entry name" value="ADH-like_C"/>
</dbReference>
<dbReference type="InterPro" id="IPR013154">
    <property type="entry name" value="ADH-like_N"/>
</dbReference>
<dbReference type="InterPro" id="IPR014183">
    <property type="entry name" value="ADH_3"/>
</dbReference>
<dbReference type="InterPro" id="IPR002328">
    <property type="entry name" value="ADH_Zn_CS"/>
</dbReference>
<dbReference type="InterPro" id="IPR011032">
    <property type="entry name" value="GroES-like_sf"/>
</dbReference>
<dbReference type="InterPro" id="IPR036291">
    <property type="entry name" value="NAD(P)-bd_dom_sf"/>
</dbReference>
<dbReference type="NCBIfam" id="TIGR02818">
    <property type="entry name" value="adh_III_F_hyde"/>
    <property type="match status" value="1"/>
</dbReference>
<dbReference type="PANTHER" id="PTHR43880">
    <property type="entry name" value="ALCOHOL DEHYDROGENASE"/>
    <property type="match status" value="1"/>
</dbReference>
<dbReference type="PANTHER" id="PTHR43880:SF12">
    <property type="entry name" value="ALCOHOL DEHYDROGENASE CLASS-3"/>
    <property type="match status" value="1"/>
</dbReference>
<dbReference type="Pfam" id="PF08240">
    <property type="entry name" value="ADH_N"/>
    <property type="match status" value="1"/>
</dbReference>
<dbReference type="Pfam" id="PF00107">
    <property type="entry name" value="ADH_zinc_N"/>
    <property type="match status" value="1"/>
</dbReference>
<dbReference type="SUPFAM" id="SSF50129">
    <property type="entry name" value="GroES-like"/>
    <property type="match status" value="2"/>
</dbReference>
<dbReference type="SUPFAM" id="SSF51735">
    <property type="entry name" value="NAD(P)-binding Rossmann-fold domains"/>
    <property type="match status" value="1"/>
</dbReference>
<dbReference type="PROSITE" id="PS00059">
    <property type="entry name" value="ADH_ZINC"/>
    <property type="match status" value="1"/>
</dbReference>
<organism>
    <name type="scientific">Candida maltosa</name>
    <name type="common">Yeast</name>
    <dbReference type="NCBI Taxonomy" id="5479"/>
    <lineage>
        <taxon>Eukaryota</taxon>
        <taxon>Fungi</taxon>
        <taxon>Dikarya</taxon>
        <taxon>Ascomycota</taxon>
        <taxon>Saccharomycotina</taxon>
        <taxon>Pichiomycetes</taxon>
        <taxon>Debaryomycetaceae</taxon>
        <taxon>Candida/Lodderomyces clade</taxon>
        <taxon>Candida</taxon>
    </lineage>
</organism>
<accession>Q06099</accession>
<sequence length="381" mass="40075">MSESTVGKPITCKAAVAWEAAKPLSIEDVTVAPPKRHEVRIKLYDTGVCHTDAYTLSGVDPEGAFPVILGHEGAGIVESIGEGVTNVKVGDHVIALYTPECGECKFCKSGKTNLCGKIRATQGKGVMPDGTSRFTCKGKEILHFMGCSTFSQYTVVADISVVAINPKAEFDKACLLGCGITTGYGAATITANVQKGDNVAVFGGGIVGLSVIQGCAERGAAQIILVDISDKKEEWGQKLGATAFVNPTKLPEGTTIVDKLIEMTDGGCDFTFDCTGNVGVMRNALEACHKGWGTSVIIGVAAAGKEISTRPFQLVTGRTWKGAAFGGVKGRSQLPGIVNNYLDGKLKVEEFITHREPLAAINKAFEEMHAGDCIRAVVDLS</sequence>